<gene>
    <name type="primary">y</name>
</gene>
<proteinExistence type="inferred from homology"/>
<accession>Q9BI23</accession>
<comment type="function">
    <text evidence="1">Controls the pigmentation pattern of the adult cuticle and larval mouth parts.</text>
</comment>
<comment type="subcellular location">
    <subcellularLocation>
        <location>Secreted</location>
    </subcellularLocation>
</comment>
<comment type="similarity">
    <text evidence="3">Belongs to the major royal jelly protein family.</text>
</comment>
<keyword id="KW-0217">Developmental protein</keyword>
<keyword id="KW-0325">Glycoprotein</keyword>
<keyword id="KW-0964">Secreted</keyword>
<keyword id="KW-0732">Signal</keyword>
<name>YELL_DROER</name>
<dbReference type="EMBL" id="AJ300670">
    <property type="protein sequence ID" value="CAC34735.1"/>
    <property type="molecule type" value="Genomic_DNA"/>
</dbReference>
<dbReference type="SMR" id="Q9BI23"/>
<dbReference type="GlyCosmos" id="Q9BI23">
    <property type="glycosylation" value="1 site, No reported glycans"/>
</dbReference>
<dbReference type="eggNOG" id="ENOG502QQ50">
    <property type="taxonomic scope" value="Eukaryota"/>
</dbReference>
<dbReference type="OrthoDB" id="7776143at2759"/>
<dbReference type="GO" id="GO:0070451">
    <property type="term" value="C:cell hair"/>
    <property type="evidence" value="ECO:0007669"/>
    <property type="project" value="EnsemblMetazoa"/>
</dbReference>
<dbReference type="GO" id="GO:0005737">
    <property type="term" value="C:cytoplasm"/>
    <property type="evidence" value="ECO:0007669"/>
    <property type="project" value="EnsemblMetazoa"/>
</dbReference>
<dbReference type="GO" id="GO:0005576">
    <property type="term" value="C:extracellular region"/>
    <property type="evidence" value="ECO:0007669"/>
    <property type="project" value="UniProtKB-SubCell"/>
</dbReference>
<dbReference type="GO" id="GO:0048067">
    <property type="term" value="P:cuticle pigmentation"/>
    <property type="evidence" value="ECO:0007669"/>
    <property type="project" value="EnsemblMetazoa"/>
</dbReference>
<dbReference type="GO" id="GO:0048065">
    <property type="term" value="P:male courtship behavior, veined wing extension"/>
    <property type="evidence" value="ECO:0007669"/>
    <property type="project" value="EnsemblMetazoa"/>
</dbReference>
<dbReference type="GO" id="GO:0042438">
    <property type="term" value="P:melanin biosynthetic process"/>
    <property type="evidence" value="ECO:0007669"/>
    <property type="project" value="EnsemblMetazoa"/>
</dbReference>
<dbReference type="GO" id="GO:0048082">
    <property type="term" value="P:regulation of adult chitin-containing cuticle pigmentation"/>
    <property type="evidence" value="ECO:0007669"/>
    <property type="project" value="EnsemblMetazoa"/>
</dbReference>
<dbReference type="FunFam" id="2.120.10.30:FF:000046">
    <property type="entry name" value="Blast:Protein yellow"/>
    <property type="match status" value="1"/>
</dbReference>
<dbReference type="Gene3D" id="2.120.10.30">
    <property type="entry name" value="TolB, C-terminal domain"/>
    <property type="match status" value="1"/>
</dbReference>
<dbReference type="InterPro" id="IPR011042">
    <property type="entry name" value="6-blade_b-propeller_TolB-like"/>
</dbReference>
<dbReference type="InterPro" id="IPR017996">
    <property type="entry name" value="Royal_jelly/protein_yellow"/>
</dbReference>
<dbReference type="PANTHER" id="PTHR10009:SF14">
    <property type="entry name" value="PROTEIN YELLOW"/>
    <property type="match status" value="1"/>
</dbReference>
<dbReference type="PANTHER" id="PTHR10009">
    <property type="entry name" value="PROTEIN YELLOW-RELATED"/>
    <property type="match status" value="1"/>
</dbReference>
<dbReference type="Pfam" id="PF03022">
    <property type="entry name" value="MRJP"/>
    <property type="match status" value="1"/>
</dbReference>
<dbReference type="PRINTS" id="PR01366">
    <property type="entry name" value="ROYALJELLY"/>
</dbReference>
<evidence type="ECO:0000250" key="1"/>
<evidence type="ECO:0000255" key="2"/>
<evidence type="ECO:0000305" key="3"/>
<reference key="1">
    <citation type="journal article" date="2001" name="Mol. Biol. Evol.">
        <title>Changes in the recombinational environment affect divergence in the yellow gene of Drosophila.</title>
        <authorList>
            <person name="Munte A.B."/>
            <person name="Aguade M."/>
            <person name="Segarra C."/>
        </authorList>
    </citation>
    <scope>NUCLEOTIDE SEQUENCE [GENOMIC DNA]</scope>
</reference>
<sequence length="541" mass="60550">MFQDKGWVLVTLIALVTPSWAAYKLQERYSWNQLDFAFPNARLKEQALASGDYIPQNALPVGVEHFGNRLFVTVPRWRDGIPATLTYINMDRSLTGSPELIPYPDWRSNTAGDCANSITTAYRIKVDECGRLWVLDTGTVGIGNTTTNPCPYAVNVYDLTTDTRIRRYVLPAVDTNPNTFIANIAVDIGKNCDDAYAYFADELGYGLIAYSWEQDKSWRFSAHSYFFPDPLRGDFNVAGINFQWGEEGIFGMSLSPIRSDGYRTLYFSPLASHRQFAVSTRILRDETRTEDSYHDFVALDERGPNSHTTSRVMSDDGIELFNLIDQNAVGCWHSSMPYSPQFHGIVDRDDVGLVFPADVKIDENKNVWVLSDRMPVFLLSDLDYSDTNFRIYTAPLATLIENTVCDLRNNAYGPPNTVSIPKQAVLPVGPPLYTKQYRPVLPQKPQTSWASSPPPPSRTYLPANSGNVVSSISVSTNTVGPAGVEVPKAYIFNQHNGINYETSGPHLFPTLQPAQSGRQDGGLKTYVNARQSGWWHHQHQG</sequence>
<feature type="signal peptide" evidence="2">
    <location>
        <begin position="1"/>
        <end position="21"/>
    </location>
</feature>
<feature type="chain" id="PRO_0000031048" description="Protein yellow">
    <location>
        <begin position="22"/>
        <end position="541"/>
    </location>
</feature>
<feature type="glycosylation site" description="N-linked (GlcNAc...) asparagine" evidence="2">
    <location>
        <position position="144"/>
    </location>
</feature>
<protein>
    <recommendedName>
        <fullName>Protein yellow</fullName>
    </recommendedName>
</protein>
<organism>
    <name type="scientific">Drosophila erecta</name>
    <name type="common">Fruit fly</name>
    <dbReference type="NCBI Taxonomy" id="7220"/>
    <lineage>
        <taxon>Eukaryota</taxon>
        <taxon>Metazoa</taxon>
        <taxon>Ecdysozoa</taxon>
        <taxon>Arthropoda</taxon>
        <taxon>Hexapoda</taxon>
        <taxon>Insecta</taxon>
        <taxon>Pterygota</taxon>
        <taxon>Neoptera</taxon>
        <taxon>Endopterygota</taxon>
        <taxon>Diptera</taxon>
        <taxon>Brachycera</taxon>
        <taxon>Muscomorpha</taxon>
        <taxon>Ephydroidea</taxon>
        <taxon>Drosophilidae</taxon>
        <taxon>Drosophila</taxon>
        <taxon>Sophophora</taxon>
    </lineage>
</organism>